<evidence type="ECO:0000255" key="1"/>
<evidence type="ECO:0000269" key="2">
    <source>
    </source>
</evidence>
<evidence type="ECO:0000269" key="3">
    <source>
    </source>
</evidence>
<evidence type="ECO:0000269" key="4">
    <source>
    </source>
</evidence>
<evidence type="ECO:0000269" key="5">
    <source>
    </source>
</evidence>
<evidence type="ECO:0000303" key="6">
    <source>
    </source>
</evidence>
<evidence type="ECO:0000305" key="7"/>
<evidence type="ECO:0007744" key="8">
    <source>
        <dbReference type="PDB" id="2WJQ"/>
    </source>
</evidence>
<evidence type="ECO:0007744" key="9">
    <source>
        <dbReference type="PDB" id="2WJR"/>
    </source>
</evidence>
<evidence type="ECO:0007829" key="10">
    <source>
        <dbReference type="PDB" id="2WJR"/>
    </source>
</evidence>
<protein>
    <recommendedName>
        <fullName evidence="7">N-acetylneuraminic acid outer membrane channel protein NanC</fullName>
    </recommendedName>
    <alternativeName>
        <fullName evidence="6">N-acetylneuraminic acid-inducible outer membrane channel</fullName>
    </alternativeName>
    <alternativeName>
        <fullName evidence="6">NanR-regulated channel</fullName>
    </alternativeName>
    <alternativeName>
        <fullName>Porin NanC</fullName>
    </alternativeName>
</protein>
<keyword id="KW-0002">3D-structure</keyword>
<keyword id="KW-0998">Cell outer membrane</keyword>
<keyword id="KW-0406">Ion transport</keyword>
<keyword id="KW-0472">Membrane</keyword>
<keyword id="KW-0626">Porin</keyword>
<keyword id="KW-1185">Reference proteome</keyword>
<keyword id="KW-0732">Signal</keyword>
<keyword id="KW-0762">Sugar transport</keyword>
<keyword id="KW-0812">Transmembrane</keyword>
<keyword id="KW-1134">Transmembrane beta strand</keyword>
<keyword id="KW-0813">Transport</keyword>
<reference key="1">
    <citation type="journal article" date="1995" name="Nucleic Acids Res.">
        <title>Analysis of the Escherichia coli genome VI: DNA sequence of the region from 92.8 through 100 minutes.</title>
        <authorList>
            <person name="Burland V.D."/>
            <person name="Plunkett G. III"/>
            <person name="Sofia H.J."/>
            <person name="Daniels D.L."/>
            <person name="Blattner F.R."/>
        </authorList>
    </citation>
    <scope>NUCLEOTIDE SEQUENCE [LARGE SCALE GENOMIC DNA]</scope>
    <source>
        <strain>K12 / MG1655 / ATCC 47076</strain>
    </source>
</reference>
<reference key="2">
    <citation type="journal article" date="1997" name="Science">
        <title>The complete genome sequence of Escherichia coli K-12.</title>
        <authorList>
            <person name="Blattner F.R."/>
            <person name="Plunkett G. III"/>
            <person name="Bloch C.A."/>
            <person name="Perna N.T."/>
            <person name="Burland V."/>
            <person name="Riley M."/>
            <person name="Collado-Vides J."/>
            <person name="Glasner J.D."/>
            <person name="Rode C.K."/>
            <person name="Mayhew G.F."/>
            <person name="Gregor J."/>
            <person name="Davis N.W."/>
            <person name="Kirkpatrick H.A."/>
            <person name="Goeden M.A."/>
            <person name="Rose D.J."/>
            <person name="Mau B."/>
            <person name="Shao Y."/>
        </authorList>
    </citation>
    <scope>NUCLEOTIDE SEQUENCE [LARGE SCALE GENOMIC DNA]</scope>
    <source>
        <strain>K12 / MG1655 / ATCC 47076</strain>
    </source>
</reference>
<reference key="3">
    <citation type="journal article" date="2006" name="Mol. Syst. Biol.">
        <title>Highly accurate genome sequences of Escherichia coli K-12 strains MG1655 and W3110.</title>
        <authorList>
            <person name="Hayashi K."/>
            <person name="Morooka N."/>
            <person name="Yamamoto Y."/>
            <person name="Fujita K."/>
            <person name="Isono K."/>
            <person name="Choi S."/>
            <person name="Ohtsubo E."/>
            <person name="Baba T."/>
            <person name="Wanner B.L."/>
            <person name="Mori H."/>
            <person name="Horiuchi T."/>
        </authorList>
    </citation>
    <scope>NUCLEOTIDE SEQUENCE [LARGE SCALE GENOMIC DNA]</scope>
    <source>
        <strain>K12 / W3110 / ATCC 27325 / DSM 5911</strain>
    </source>
</reference>
<reference key="4">
    <citation type="journal article" date="2005" name="J. Bacteriol.">
        <title>Function and expression of an N-acetylneuraminic acid-inducible outer membrane channel in Escherichia coli.</title>
        <authorList>
            <person name="Condemine G."/>
            <person name="Berrier C."/>
            <person name="Plumbridge J."/>
            <person name="Ghazi A."/>
        </authorList>
    </citation>
    <scope>FUNCTION</scope>
    <scope>TRANSPORTER ACTIVITY</scope>
    <scope>TRANSCRIPTIONAL REGULATION</scope>
</reference>
<reference key="5">
    <citation type="journal article" date="2012" name="Eur. Biophys. J.">
        <title>Single-channel measurements of an N-acetylneuraminic acid-inducible outer membrane channel in Escherichia coli.</title>
        <authorList>
            <person name="Giri J."/>
            <person name="Tang J.M."/>
            <person name="Wirth C."/>
            <person name="Peneff C.M."/>
            <person name="Eisenberg B."/>
        </authorList>
    </citation>
    <scope>FUNCTION</scope>
    <scope>TRANSPORTER ACTIVITY</scope>
</reference>
<reference key="6">
    <citation type="journal article" date="2013" name="J. Bacteriol.">
        <title>Control of the Escherichia coli sialoregulon by transcriptional repressor NanR.</title>
        <authorList>
            <person name="Kalivoda K.A."/>
            <person name="Steenbergen S.M."/>
            <person name="Vimr E.R."/>
        </authorList>
    </citation>
    <scope>INDUCTION</scope>
</reference>
<reference evidence="8 9" key="7">
    <citation type="journal article" date="2009" name="J. Mol. Biol.">
        <title>NanC crystal structure, a model for outer-membrane channels of the acidic sugar-specific KdgM porin family.</title>
        <authorList>
            <person name="Wirth C."/>
            <person name="Condemine G."/>
            <person name="Boiteux C."/>
            <person name="Berneche S."/>
            <person name="Schirmer T."/>
            <person name="Peneff C.M."/>
        </authorList>
    </citation>
    <scope>X-RAY CRYSTALLOGRAPHY (1.8 ANGSTROMS) OF 24-238</scope>
    <scope>SUBCELLULAR LOCATION</scope>
    <scope>TOPOLOGY</scope>
    <scope>SUBUNIT</scope>
</reference>
<feature type="signal peptide" evidence="1">
    <location>
        <begin position="1"/>
        <end position="23"/>
    </location>
</feature>
<feature type="chain" id="PRO_0000016601" description="N-acetylneuraminic acid outer membrane channel protein NanC">
    <location>
        <begin position="24"/>
        <end position="238"/>
    </location>
</feature>
<feature type="topological domain" description="Periplasmic" evidence="3 8 9">
    <location>
        <begin position="24"/>
        <end position="25"/>
    </location>
</feature>
<feature type="transmembrane region" evidence="3 8 9">
    <location>
        <begin position="26"/>
        <end position="32"/>
    </location>
</feature>
<feature type="topological domain" description="Extracellular" evidence="3 8 9">
    <location>
        <begin position="33"/>
        <end position="39"/>
    </location>
</feature>
<feature type="transmembrane region" evidence="3 8 9">
    <location>
        <begin position="40"/>
        <end position="49"/>
    </location>
</feature>
<feature type="topological domain" description="Periplasmic" evidence="3 8 9">
    <location>
        <begin position="50"/>
        <end position="52"/>
    </location>
</feature>
<feature type="transmembrane region" evidence="3 8 9">
    <location>
        <begin position="53"/>
        <end position="61"/>
    </location>
</feature>
<feature type="topological domain" description="Extracellular" evidence="3 8 9">
    <location>
        <begin position="62"/>
        <end position="76"/>
    </location>
</feature>
<feature type="transmembrane region" evidence="3 8 9">
    <location>
        <begin position="77"/>
        <end position="86"/>
    </location>
</feature>
<feature type="topological domain" description="Periplasmic" evidence="3 8 9">
    <location>
        <begin position="87"/>
        <end position="91"/>
    </location>
</feature>
<feature type="transmembrane region" evidence="3 8 9">
    <location>
        <begin position="92"/>
        <end position="102"/>
    </location>
</feature>
<feature type="topological domain" description="Extracellular" evidence="3 8 9">
    <location>
        <begin position="103"/>
        <end position="107"/>
    </location>
</feature>
<feature type="transmembrane region" evidence="3 8 9">
    <location>
        <begin position="108"/>
        <end position="117"/>
    </location>
</feature>
<feature type="topological domain" description="Periplasmic" evidence="3 8 9">
    <location>
        <begin position="118"/>
        <end position="122"/>
    </location>
</feature>
<feature type="transmembrane region" evidence="3 8 9">
    <location>
        <begin position="123"/>
        <end position="132"/>
    </location>
</feature>
<feature type="topological domain" description="Extracellular" evidence="3 8 9">
    <location>
        <begin position="133"/>
        <end position="151"/>
    </location>
</feature>
<feature type="transmembrane region" evidence="3 8 9">
    <location>
        <begin position="152"/>
        <end position="159"/>
    </location>
</feature>
<feature type="topological domain" description="Periplasmic" evidence="3 8 9">
    <location>
        <begin position="160"/>
        <end position="164"/>
    </location>
</feature>
<feature type="transmembrane region" evidence="3 8 9">
    <location>
        <begin position="165"/>
        <end position="173"/>
    </location>
</feature>
<feature type="topological domain" description="Extracellular" evidence="3 8 9">
    <location>
        <begin position="174"/>
        <end position="190"/>
    </location>
</feature>
<feature type="transmembrane region" evidence="3 8 9">
    <location>
        <begin position="191"/>
        <end position="200"/>
    </location>
</feature>
<feature type="topological domain" description="Periplasmic" evidence="3 8 9">
    <location>
        <begin position="201"/>
        <end position="203"/>
    </location>
</feature>
<feature type="transmembrane region" evidence="3 8 9">
    <location>
        <begin position="204"/>
        <end position="212"/>
    </location>
</feature>
<feature type="topological domain" description="Extracellular" evidence="3 8 9">
    <location>
        <begin position="213"/>
        <end position="228"/>
    </location>
</feature>
<feature type="transmembrane region" evidence="3 8 9">
    <location>
        <begin position="229"/>
        <end position="236"/>
    </location>
</feature>
<feature type="topological domain" description="Periplasmic" evidence="3 8 9">
    <location>
        <begin position="237"/>
        <end position="238"/>
    </location>
</feature>
<feature type="strand" evidence="10">
    <location>
        <begin position="26"/>
        <end position="33"/>
    </location>
</feature>
<feature type="turn" evidence="10">
    <location>
        <begin position="34"/>
        <end position="37"/>
    </location>
</feature>
<feature type="strand" evidence="10">
    <location>
        <begin position="38"/>
        <end position="48"/>
    </location>
</feature>
<feature type="strand" evidence="10">
    <location>
        <begin position="52"/>
        <end position="64"/>
    </location>
</feature>
<feature type="strand" evidence="10">
    <location>
        <begin position="77"/>
        <end position="84"/>
    </location>
</feature>
<feature type="strand" evidence="10">
    <location>
        <begin position="86"/>
        <end position="103"/>
    </location>
</feature>
<feature type="strand" evidence="10">
    <location>
        <begin position="106"/>
        <end position="120"/>
    </location>
</feature>
<feature type="strand" evidence="10">
    <location>
        <begin position="123"/>
        <end position="136"/>
    </location>
</feature>
<feature type="strand" evidence="10">
    <location>
        <begin position="150"/>
        <end position="160"/>
    </location>
</feature>
<feature type="strand" evidence="10">
    <location>
        <begin position="162"/>
        <end position="179"/>
    </location>
</feature>
<feature type="strand" evidence="10">
    <location>
        <begin position="185"/>
        <end position="198"/>
    </location>
</feature>
<feature type="strand" evidence="10">
    <location>
        <begin position="200"/>
        <end position="212"/>
    </location>
</feature>
<feature type="strand" evidence="10">
    <location>
        <begin position="217"/>
        <end position="219"/>
    </location>
</feature>
<feature type="strand" evidence="10">
    <location>
        <begin position="222"/>
        <end position="225"/>
    </location>
</feature>
<feature type="strand" evidence="10">
    <location>
        <begin position="228"/>
        <end position="236"/>
    </location>
</feature>
<organism>
    <name type="scientific">Escherichia coli (strain K12)</name>
    <dbReference type="NCBI Taxonomy" id="83333"/>
    <lineage>
        <taxon>Bacteria</taxon>
        <taxon>Pseudomonadati</taxon>
        <taxon>Pseudomonadota</taxon>
        <taxon>Gammaproteobacteria</taxon>
        <taxon>Enterobacterales</taxon>
        <taxon>Enterobacteriaceae</taxon>
        <taxon>Escherichia</taxon>
    </lineage>
</organism>
<dbReference type="EMBL" id="U14003">
    <property type="protein sequence ID" value="AAA97207.1"/>
    <property type="status" value="ALT_INIT"/>
    <property type="molecule type" value="Genomic_DNA"/>
</dbReference>
<dbReference type="EMBL" id="U00096">
    <property type="protein sequence ID" value="AAC77267.2"/>
    <property type="molecule type" value="Genomic_DNA"/>
</dbReference>
<dbReference type="EMBL" id="AP009048">
    <property type="protein sequence ID" value="BAE78304.1"/>
    <property type="molecule type" value="Genomic_DNA"/>
</dbReference>
<dbReference type="PIR" id="S56536">
    <property type="entry name" value="S56536"/>
</dbReference>
<dbReference type="RefSeq" id="NP_418731.2">
    <property type="nucleotide sequence ID" value="NC_000913.3"/>
</dbReference>
<dbReference type="RefSeq" id="WP_001295734.1">
    <property type="nucleotide sequence ID" value="NZ_SSZK01000071.1"/>
</dbReference>
<dbReference type="PDB" id="2WJQ">
    <property type="method" value="X-ray"/>
    <property type="resolution" value="2.00 A"/>
    <property type="chains" value="A=24-238"/>
</dbReference>
<dbReference type="PDB" id="2WJR">
    <property type="method" value="X-ray"/>
    <property type="resolution" value="1.80 A"/>
    <property type="chains" value="A=25-238"/>
</dbReference>
<dbReference type="PDBsum" id="2WJQ"/>
<dbReference type="PDBsum" id="2WJR"/>
<dbReference type="SMR" id="P69856"/>
<dbReference type="BioGRID" id="4259375">
    <property type="interactions" value="217"/>
</dbReference>
<dbReference type="FunCoup" id="P69856">
    <property type="interactions" value="91"/>
</dbReference>
<dbReference type="STRING" id="511145.b4311"/>
<dbReference type="DrugBank" id="DB04147">
    <property type="generic name" value="Dodecyldimethylamine N-oxide"/>
</dbReference>
<dbReference type="TCDB" id="1.B.35.2.1">
    <property type="family name" value="the oligogalacturonate-specific porin (kdgm) family"/>
</dbReference>
<dbReference type="PaxDb" id="511145-b4311"/>
<dbReference type="EnsemblBacteria" id="AAC77267">
    <property type="protein sequence ID" value="AAC77267"/>
    <property type="gene ID" value="b4311"/>
</dbReference>
<dbReference type="GeneID" id="93777530"/>
<dbReference type="GeneID" id="946843"/>
<dbReference type="KEGG" id="ecj:JW5778"/>
<dbReference type="KEGG" id="eco:b4311"/>
<dbReference type="PATRIC" id="fig|1411691.4.peg.2382"/>
<dbReference type="EchoBASE" id="EB2290"/>
<dbReference type="eggNOG" id="COG1452">
    <property type="taxonomic scope" value="Bacteria"/>
</dbReference>
<dbReference type="HOGENOM" id="CLU_081853_2_0_6"/>
<dbReference type="InParanoid" id="P69856"/>
<dbReference type="OMA" id="YFKRNSG"/>
<dbReference type="OrthoDB" id="6570067at2"/>
<dbReference type="PhylomeDB" id="P69856"/>
<dbReference type="BioCyc" id="EcoCyc:G7921-MONOMER"/>
<dbReference type="BioCyc" id="MetaCyc:G7921-MONOMER"/>
<dbReference type="EvolutionaryTrace" id="P69856"/>
<dbReference type="PRO" id="PR:P69856"/>
<dbReference type="Proteomes" id="UP000000625">
    <property type="component" value="Chromosome"/>
</dbReference>
<dbReference type="GO" id="GO:0009279">
    <property type="term" value="C:cell outer membrane"/>
    <property type="evidence" value="ECO:0000318"/>
    <property type="project" value="GO_Central"/>
</dbReference>
<dbReference type="GO" id="GO:0046930">
    <property type="term" value="C:pore complex"/>
    <property type="evidence" value="ECO:0007669"/>
    <property type="project" value="UniProtKB-KW"/>
</dbReference>
<dbReference type="GO" id="GO:0015478">
    <property type="term" value="F:oligosaccharide transporting porin activity"/>
    <property type="evidence" value="ECO:0000315"/>
    <property type="project" value="EcoliWiki"/>
</dbReference>
<dbReference type="GO" id="GO:0015288">
    <property type="term" value="F:porin activity"/>
    <property type="evidence" value="ECO:0000314"/>
    <property type="project" value="EcoCyc"/>
</dbReference>
<dbReference type="GO" id="GO:0015136">
    <property type="term" value="F:sialic acid transmembrane transporter activity"/>
    <property type="evidence" value="ECO:0000315"/>
    <property type="project" value="EcoliWiki"/>
</dbReference>
<dbReference type="GO" id="GO:0006811">
    <property type="term" value="P:monoatomic ion transport"/>
    <property type="evidence" value="ECO:0007669"/>
    <property type="project" value="UniProtKB-KW"/>
</dbReference>
<dbReference type="GO" id="GO:0015772">
    <property type="term" value="P:oligosaccharide transport"/>
    <property type="evidence" value="ECO:0000315"/>
    <property type="project" value="EcoliWiki"/>
</dbReference>
<dbReference type="GO" id="GO:0015739">
    <property type="term" value="P:sialic acid transport"/>
    <property type="evidence" value="ECO:0000269"/>
    <property type="project" value="EcoCyc"/>
</dbReference>
<dbReference type="FunFam" id="2.40.160.40:FF:000002">
    <property type="entry name" value="N-acetylneuraminic acid outer membrane channel protein NanC"/>
    <property type="match status" value="1"/>
</dbReference>
<dbReference type="Gene3D" id="2.40.160.40">
    <property type="entry name" value="monomeric porin ompg"/>
    <property type="match status" value="1"/>
</dbReference>
<dbReference type="InterPro" id="IPR053713">
    <property type="entry name" value="Bact_OM_Channel_sf"/>
</dbReference>
<dbReference type="InterPro" id="IPR009331">
    <property type="entry name" value="Oligogalacturonate-sp_porin"/>
</dbReference>
<dbReference type="PANTHER" id="PTHR38105:SF2">
    <property type="entry name" value="N-ACETYLNEURAMINIC ACID OUTER MEMBRANE CHANNEL PROTEIN NANC-RELATED"/>
    <property type="match status" value="1"/>
</dbReference>
<dbReference type="PANTHER" id="PTHR38105">
    <property type="entry name" value="OUTER MEMBRANE PROTEIN-RELATED-RELATED"/>
    <property type="match status" value="1"/>
</dbReference>
<dbReference type="Pfam" id="PF06178">
    <property type="entry name" value="KdgM"/>
    <property type="match status" value="1"/>
</dbReference>
<sequence length="238" mass="27888">MKKAKILSGVLLLCFSSPLISQAATLDVRGGYRSGSHAYETRLKVSEGWQNGWWASMESNTWNTIHDNKKENAALNDVQVEVNYAIKLDDQWTVRPGMLTHFSSNGTRYGPYVKLSWDATKDLNFGIRYRYDWKAYRQQDLSGDMSRDNVHRWDGYVTYHINSDFTFAWQTTLYSKQNDYRYANHKKWATENAFVLQYHMTPDITPYIEYDYLDRQGVYNGRDNLSENSYRIGVSFKL</sequence>
<gene>
    <name evidence="6" type="primary">nanC</name>
    <name type="synonym">yjhA</name>
    <name type="ordered locus">b4311</name>
    <name type="ordered locus">JW5778</name>
</gene>
<name>NANC_ECOLI</name>
<proteinExistence type="evidence at protein level"/>
<comment type="function">
    <text evidence="2 4">Outer membrane channel protein allowing the entry of N-acetylneuraminic acid (Neu5Ac, the most abundant sialic acid on host cell surfaces) into the bacteria (PubMed:15743943, PubMed:22246445). NanC proteins form high-conductance channels which are open at low membrane potentials and which have a weak anion selectivity (PubMed:15743943).</text>
</comment>
<comment type="catalytic activity">
    <reaction evidence="2 4">
        <text>N-acetylneuraminate(in) = N-acetylneuraminate(out)</text>
        <dbReference type="Rhea" id="RHEA:28991"/>
        <dbReference type="ChEBI" id="CHEBI:35418"/>
    </reaction>
</comment>
<comment type="subunit">
    <text evidence="3">Monomer.</text>
</comment>
<comment type="subcellular location">
    <subcellularLocation>
        <location evidence="3">Cell outer membrane</location>
        <topology evidence="3">Multi-pass membrane protein</topology>
    </subcellularLocation>
</comment>
<comment type="induction">
    <text evidence="2 5">Induced by N-acetylneuraminate and modulated by N-acetylglucosamine. This regulation occurs via the NanR and NagC regulators. NanC expression is also activated by the regulators cyclic AMP-catabolite activator protein, OmpR, and CpxR.</text>
</comment>
<comment type="similarity">
    <text evidence="7">Belongs to the oligogalacturonate-specific porin KdgM (TC 1.B.35) family. NanC subfamily.</text>
</comment>
<comment type="sequence caution" evidence="7">
    <conflict type="erroneous initiation">
        <sequence resource="EMBL-CDS" id="AAA97207"/>
    </conflict>
    <text>Extended N-terminus.</text>
</comment>
<accession>P69856</accession>
<accession>P39372</accession>
<accession>Q2M602</accession>